<organism evidence="7 9">
    <name type="scientific">Drosophila melanogaster</name>
    <name type="common">Fruit fly</name>
    <dbReference type="NCBI Taxonomy" id="7227"/>
    <lineage>
        <taxon>Eukaryota</taxon>
        <taxon>Metazoa</taxon>
        <taxon>Ecdysozoa</taxon>
        <taxon>Arthropoda</taxon>
        <taxon>Hexapoda</taxon>
        <taxon>Insecta</taxon>
        <taxon>Pterygota</taxon>
        <taxon>Neoptera</taxon>
        <taxon>Endopterygota</taxon>
        <taxon>Diptera</taxon>
        <taxon>Brachycera</taxon>
        <taxon>Muscomorpha</taxon>
        <taxon>Ephydroidea</taxon>
        <taxon>Drosophilidae</taxon>
        <taxon>Drosophila</taxon>
        <taxon>Sophophora</taxon>
    </lineage>
</organism>
<proteinExistence type="inferred from homology"/>
<accession>Q9VZS7</accession>
<protein>
    <recommendedName>
        <fullName evidence="5">Protein hobbit</fullName>
    </recommendedName>
    <alternativeName>
        <fullName evidence="6">Bridge-like lipid transfer protein family member 2</fullName>
        <shortName>BLTP2</shortName>
    </alternativeName>
</protein>
<dbReference type="EMBL" id="AE014296">
    <property type="protein sequence ID" value="AAF47740.2"/>
    <property type="molecule type" value="Genomic_DNA"/>
</dbReference>
<dbReference type="EMBL" id="AE014296">
    <property type="protein sequence ID" value="ALI30451.1"/>
    <property type="molecule type" value="Genomic_DNA"/>
</dbReference>
<dbReference type="RefSeq" id="NP_001303402.1">
    <property type="nucleotide sequence ID" value="NM_001316473.1"/>
</dbReference>
<dbReference type="RefSeq" id="NP_647789.2">
    <property type="nucleotide sequence ID" value="NM_139532.2"/>
</dbReference>
<dbReference type="SMR" id="Q9VZS7"/>
<dbReference type="FunCoup" id="Q9VZS7">
    <property type="interactions" value="1641"/>
</dbReference>
<dbReference type="IntAct" id="Q9VZS7">
    <property type="interactions" value="3"/>
</dbReference>
<dbReference type="STRING" id="7227.FBpp0291508"/>
<dbReference type="PaxDb" id="7227-FBpp0291508"/>
<dbReference type="EnsemblMetazoa" id="FBtr0302302">
    <property type="protein sequence ID" value="FBpp0291508"/>
    <property type="gene ID" value="FBgn0035420"/>
</dbReference>
<dbReference type="EnsemblMetazoa" id="FBtr0346807">
    <property type="protein sequence ID" value="FBpp0312382"/>
    <property type="gene ID" value="FBgn0035420"/>
</dbReference>
<dbReference type="GeneID" id="38395"/>
<dbReference type="KEGG" id="dme:Dmel_CG14967"/>
<dbReference type="UCSC" id="CG14967-RA">
    <property type="organism name" value="d. melanogaster"/>
</dbReference>
<dbReference type="AGR" id="FB:FBgn0035420"/>
<dbReference type="CTD" id="38395"/>
<dbReference type="FlyBase" id="FBgn0035420">
    <property type="gene designation" value="hob"/>
</dbReference>
<dbReference type="VEuPathDB" id="VectorBase:FBgn0035420"/>
<dbReference type="eggNOG" id="KOG1910">
    <property type="taxonomic scope" value="Eukaryota"/>
</dbReference>
<dbReference type="GeneTree" id="ENSGT00600000084481"/>
<dbReference type="HOGENOM" id="CLU_000926_1_0_1"/>
<dbReference type="InParanoid" id="Q9VZS7"/>
<dbReference type="OMA" id="GEWRLNY"/>
<dbReference type="OrthoDB" id="1562405at2759"/>
<dbReference type="BioGRID-ORCS" id="38395">
    <property type="hits" value="0 hits in 1 CRISPR screen"/>
</dbReference>
<dbReference type="GenomeRNAi" id="38395"/>
<dbReference type="PRO" id="PR:Q9VZS7"/>
<dbReference type="Proteomes" id="UP000000803">
    <property type="component" value="Chromosome 3L"/>
</dbReference>
<dbReference type="Bgee" id="FBgn0035420">
    <property type="expression patterns" value="Expressed in embryonic/larval hemocyte (Drosophila) and 92 other cell types or tissues"/>
</dbReference>
<dbReference type="ExpressionAtlas" id="Q9VZS7">
    <property type="expression patterns" value="baseline and differential"/>
</dbReference>
<dbReference type="GO" id="GO:0005783">
    <property type="term" value="C:endoplasmic reticulum"/>
    <property type="evidence" value="ECO:0000314"/>
    <property type="project" value="FlyBase"/>
</dbReference>
<dbReference type="GO" id="GO:0005789">
    <property type="term" value="C:endoplasmic reticulum membrane"/>
    <property type="evidence" value="ECO:0000314"/>
    <property type="project" value="FlyBase"/>
</dbReference>
<dbReference type="GO" id="GO:0140268">
    <property type="term" value="C:endoplasmic reticulum-plasma membrane contact site"/>
    <property type="evidence" value="ECO:0000314"/>
    <property type="project" value="FlyBase"/>
</dbReference>
<dbReference type="GO" id="GO:0031966">
    <property type="term" value="C:mitochondrial membrane"/>
    <property type="evidence" value="ECO:0007669"/>
    <property type="project" value="UniProtKB-SubCell"/>
</dbReference>
<dbReference type="GO" id="GO:0005886">
    <property type="term" value="C:plasma membrane"/>
    <property type="evidence" value="ECO:0007669"/>
    <property type="project" value="UniProtKB-SubCell"/>
</dbReference>
<dbReference type="GO" id="GO:0035091">
    <property type="term" value="F:phosphatidylinositol binding"/>
    <property type="evidence" value="ECO:0000315"/>
    <property type="project" value="FlyBase"/>
</dbReference>
<dbReference type="GO" id="GO:1903307">
    <property type="term" value="P:positive regulation of regulated secretory pathway"/>
    <property type="evidence" value="ECO:0000315"/>
    <property type="project" value="FlyBase"/>
</dbReference>
<dbReference type="InterPro" id="IPR019441">
    <property type="entry name" value="FMP27/BLTP2/Hobbit_GFWDK_RBG"/>
</dbReference>
<dbReference type="InterPro" id="IPR045167">
    <property type="entry name" value="Hobbit"/>
</dbReference>
<dbReference type="PANTHER" id="PTHR15678">
    <property type="entry name" value="ANTIGEN MLAA-22-RELATED"/>
    <property type="match status" value="1"/>
</dbReference>
<dbReference type="PANTHER" id="PTHR15678:SF6">
    <property type="entry name" value="BRIDGE-LIKE LIPID TRANSFER PROTEIN FAMILY MEMBER 2"/>
    <property type="match status" value="1"/>
</dbReference>
<dbReference type="Pfam" id="PF10344">
    <property type="entry name" value="Hobbit"/>
    <property type="match status" value="1"/>
</dbReference>
<dbReference type="SMART" id="SM01214">
    <property type="entry name" value="Fmp27_GFWDK"/>
    <property type="match status" value="1"/>
</dbReference>
<feature type="signal peptide" evidence="2">
    <location>
        <begin position="1"/>
        <end position="21"/>
    </location>
</feature>
<feature type="chain" id="PRO_0000456960" description="Protein hobbit">
    <location>
        <begin position="22"/>
        <end position="2300"/>
    </location>
</feature>
<feature type="region of interest" description="Transmembrane domain" evidence="4">
    <location>
        <begin position="23"/>
        <end position="117"/>
    </location>
</feature>
<feature type="region of interest" description="Disordered" evidence="3">
    <location>
        <begin position="269"/>
        <end position="290"/>
    </location>
</feature>
<feature type="region of interest" description="Required for endoplasmic reticulum-cell membrane contact sites location and binding to phosphatidylinositols" evidence="4">
    <location>
        <begin position="1750"/>
        <end position="2300"/>
    </location>
</feature>
<feature type="region of interest" description="Disordered" evidence="3">
    <location>
        <begin position="2111"/>
        <end position="2148"/>
    </location>
</feature>
<feature type="compositionally biased region" description="Polar residues" evidence="3">
    <location>
        <begin position="270"/>
        <end position="282"/>
    </location>
</feature>
<feature type="compositionally biased region" description="Low complexity" evidence="3">
    <location>
        <begin position="2119"/>
        <end position="2140"/>
    </location>
</feature>
<gene>
    <name evidence="8" type="primary">hob</name>
    <name evidence="8" type="ORF">CG14967</name>
</gene>
<sequence>MMLQLLLFCLALFIFVYWVLPTGISWYLVKRFRVKVRIGRISLPYLSLKNVHISKSGFSVQIEEVCLRSSFFTTEVTKLLSIYIRDIRINKDIHSRQDDSYDQDSYELRRTQTLAGKASEAKGVPDFRQTKVPASIITFAQFMAVHVNNISVVLMNNDFDPGWFIHATAKELHLDGSIVQNARVLLVNAALSEAQAKMLRHCSSRRQSLENLNKIRPCLGEVSFDMTLDASLFAQGPLSMDTLSLVINNAKSVIHGGLYEFLSEAKRRTSTGQPSRRSTQGLAPSKRSYDNDNYEKLAPIIPKNFNFSIKAATFSAVKENSQNDFSAKLQSFQISGKFNSKVTDEKTLLPSMLAKLGFHHLDIDTKYEKLLFVEQFTIDSVLEKDIFNLYVKLKTFQIIYNHSEIYDFVNNNFLARQRSSEAQPMQLIHKQKSLPDHLDLDTAVQSNLRANQRREGGVLEWIMQRIVVKGCAELFNVSLLMKLEDEHIAMSVSHTRFLLEQIEEKRSNLYENKFLNLLLNQRQWSMELMVETLWSNLGNSINDTNNLKKTHSPGSPFFLGVSLVKLCSYANTTKLDISVHTFRTEYSMQLAEFVVKSMECLRQYRGIKPKNMSGQSHARPNAGLTLSVQPSQSSTSLRVSVKVKDITAYFVNHHNVYSLLSFSELNLSRSQSLTTLKLEEFQMAIMRSMTASSLCLTDFSDVFATCKMIRLEHEQVEGTMGKLSIYIPGNMEATWNSNLHMHLLTLVRDMQDLKTELAIPASSVKKTTPKEGFIVELSAERSTIFEIKFSDRHSIQIFVESLFFSQKERCIIYAENVFVKIDDQHIFTVKELDLQSVPRLEVLTQERQNFPGFQLPSNKVWVTTIGSFKAIFPYDHDFYNAVNGECTSHFKWLKMVHNYKKKPFTVDSPLPCDLVIKIKEFLLEISDDPFEVKLRDNYVLLVDEYLESLKRKALFDKKIGELCSERLLLPSGTIEGLYANLVKKNSEIYIQRSKKIRESGPVRTRLLAWIMTDVNIMAMADTSIHGYNNVTRIMREIDHESPWPEEGLEFSTLWCRGVNISCTEWKFMLRDFPQPMFCVKSMRLYGNLCGAEQMGSKRAKRDVFIDVGEPFGTDVIQRSMPSLKFYHDFDCELESCSYAFGACWEPVMAQCNLSFEKISAPSKDPSPPLPFWDKLRLLLHGRLTLIAKQFTILLHASLDPYNTTEEMELTWNNCGIVLTNAKIMFKGELNVTVRTASRYDDCRLLHFPNLKLTIKLKWVCLANPNDHHAVMPCAPDKLPEYSSNQVHDSFRAFRSLNLNIWISFETKPKAGEDLEVDIPSLVLYGSTLRWFESLQLILSGVTRPTRRGPVFNNVRPRKKPLSRHYKKANLQMCLHKFQVLYWMSHALQKGFQLNGRRVSFSSEHSLTLNPIDDGLIHRPRADWSTIYMNCELNDAEIWLKSILTEKMDSSSENLASAADAFKIVRFYFLSVAKVSYGREALIPTTATSTEEDVKAQSTTPTHKLVVYDLKGAWTKSNRDVAFALFDSFMKSQKLKNNLSTEAVKSYRKEGPNSAVLKHKRSDSTITLSSTNNEVLPISNPNASMKKAPAQIHATAMLQQLIAEADHKFNVYSDDHSTQSRELQLQGLQACSAQDIIHENWSISLVNSQVLLKGCETSGYVIISAAKAEILQREHRPVWRERSLISKTTWKGLLECMQYYATVSAGDNNSLLEKEIMWLTVDNIQDKDETVINNLPDISHLVGSGRSVGGVVSETVGAFLSDNSGGAQPVQLQRIVSKCKCEFFYVSYGDAIDPNSITEVPPPPSEELQSPWEKQDDPVDAFTLMHHDLDVCTNSLQYAMILDIVNNLLLYVEPQRKQAAEKLTRMRFQLQLHSTEDQKRPIQQKQTVIRSLLMKIRSLEKDTHMISKERIEDGDSLELRQEYDHVQQMIRESKEELNTFSEDLDMMLLCYKETQLSQLSKISNVRSDESVTMVRTNEICFKRAQWRLTETDGQIGIADLVLSAFLYTKKSKSDDSVEHLLELGNIRMENLLPREIYRDVLLATEIQKDMPVDTHKRVLRIFCREKAPVGGISVKEHFEINVAPITIAITKKFYSTMLKFCFPDRDASETEVSDELDDNASTSSASTTNLQAKSSTSSSTKRSGKGKKGAKDSEFYVKIEKDDVEKMKERAEKNKLFIYIKIPEVPVRVSYKGNKEKNLEDITDYSLVIPTLEYHNVTWTWLDLLLAMKSVSRRVIFSQAIKQKLHIHQRQPILSAGERATPQEAEDKAVMLFGNRLLNENRNQKKGVFKFASSGKRSGND</sequence>
<evidence type="ECO:0000250" key="1">
    <source>
        <dbReference type="UniProtKB" id="Q06179"/>
    </source>
</evidence>
<evidence type="ECO:0000255" key="2"/>
<evidence type="ECO:0000256" key="3">
    <source>
        <dbReference type="SAM" id="MobiDB-lite"/>
    </source>
</evidence>
<evidence type="ECO:0000269" key="4">
    <source>
    </source>
</evidence>
<evidence type="ECO:0000303" key="5">
    <source>
    </source>
</evidence>
<evidence type="ECO:0000303" key="6">
    <source>
    </source>
</evidence>
<evidence type="ECO:0000312" key="7">
    <source>
        <dbReference type="EMBL" id="AAF47740.2"/>
    </source>
</evidence>
<evidence type="ECO:0000312" key="8">
    <source>
        <dbReference type="FlyBase" id="FBgn0035420"/>
    </source>
</evidence>
<evidence type="ECO:0000312" key="9">
    <source>
        <dbReference type="Proteomes" id="UP000000803"/>
    </source>
</evidence>
<keyword id="KW-1003">Cell membrane</keyword>
<keyword id="KW-0256">Endoplasmic reticulum</keyword>
<keyword id="KW-0472">Membrane</keyword>
<keyword id="KW-0496">Mitochondrion</keyword>
<keyword id="KW-1185">Reference proteome</keyword>
<keyword id="KW-0732">Signal</keyword>
<name>HOBIT_DROME</name>
<reference evidence="7 9" key="1">
    <citation type="journal article" date="2000" name="Science">
        <title>The genome sequence of Drosophila melanogaster.</title>
        <authorList>
            <person name="Adams M.D."/>
            <person name="Celniker S.E."/>
            <person name="Holt R.A."/>
            <person name="Evans C.A."/>
            <person name="Gocayne J.D."/>
            <person name="Amanatides P.G."/>
            <person name="Scherer S.E."/>
            <person name="Li P.W."/>
            <person name="Hoskins R.A."/>
            <person name="Galle R.F."/>
            <person name="George R.A."/>
            <person name="Lewis S.E."/>
            <person name="Richards S."/>
            <person name="Ashburner M."/>
            <person name="Henderson S.N."/>
            <person name="Sutton G.G."/>
            <person name="Wortman J.R."/>
            <person name="Yandell M.D."/>
            <person name="Zhang Q."/>
            <person name="Chen L.X."/>
            <person name="Brandon R.C."/>
            <person name="Rogers Y.-H.C."/>
            <person name="Blazej R.G."/>
            <person name="Champe M."/>
            <person name="Pfeiffer B.D."/>
            <person name="Wan K.H."/>
            <person name="Doyle C."/>
            <person name="Baxter E.G."/>
            <person name="Helt G."/>
            <person name="Nelson C.R."/>
            <person name="Miklos G.L.G."/>
            <person name="Abril J.F."/>
            <person name="Agbayani A."/>
            <person name="An H.-J."/>
            <person name="Andrews-Pfannkoch C."/>
            <person name="Baldwin D."/>
            <person name="Ballew R.M."/>
            <person name="Basu A."/>
            <person name="Baxendale J."/>
            <person name="Bayraktaroglu L."/>
            <person name="Beasley E.M."/>
            <person name="Beeson K.Y."/>
            <person name="Benos P.V."/>
            <person name="Berman B.P."/>
            <person name="Bhandari D."/>
            <person name="Bolshakov S."/>
            <person name="Borkova D."/>
            <person name="Botchan M.R."/>
            <person name="Bouck J."/>
            <person name="Brokstein P."/>
            <person name="Brottier P."/>
            <person name="Burtis K.C."/>
            <person name="Busam D.A."/>
            <person name="Butler H."/>
            <person name="Cadieu E."/>
            <person name="Center A."/>
            <person name="Chandra I."/>
            <person name="Cherry J.M."/>
            <person name="Cawley S."/>
            <person name="Dahlke C."/>
            <person name="Davenport L.B."/>
            <person name="Davies P."/>
            <person name="de Pablos B."/>
            <person name="Delcher A."/>
            <person name="Deng Z."/>
            <person name="Mays A.D."/>
            <person name="Dew I."/>
            <person name="Dietz S.M."/>
            <person name="Dodson K."/>
            <person name="Doup L.E."/>
            <person name="Downes M."/>
            <person name="Dugan-Rocha S."/>
            <person name="Dunkov B.C."/>
            <person name="Dunn P."/>
            <person name="Durbin K.J."/>
            <person name="Evangelista C.C."/>
            <person name="Ferraz C."/>
            <person name="Ferriera S."/>
            <person name="Fleischmann W."/>
            <person name="Fosler C."/>
            <person name="Gabrielian A.E."/>
            <person name="Garg N.S."/>
            <person name="Gelbart W.M."/>
            <person name="Glasser K."/>
            <person name="Glodek A."/>
            <person name="Gong F."/>
            <person name="Gorrell J.H."/>
            <person name="Gu Z."/>
            <person name="Guan P."/>
            <person name="Harris M."/>
            <person name="Harris N.L."/>
            <person name="Harvey D.A."/>
            <person name="Heiman T.J."/>
            <person name="Hernandez J.R."/>
            <person name="Houck J."/>
            <person name="Hostin D."/>
            <person name="Houston K.A."/>
            <person name="Howland T.J."/>
            <person name="Wei M.-H."/>
            <person name="Ibegwam C."/>
            <person name="Jalali M."/>
            <person name="Kalush F."/>
            <person name="Karpen G.H."/>
            <person name="Ke Z."/>
            <person name="Kennison J.A."/>
            <person name="Ketchum K.A."/>
            <person name="Kimmel B.E."/>
            <person name="Kodira C.D."/>
            <person name="Kraft C.L."/>
            <person name="Kravitz S."/>
            <person name="Kulp D."/>
            <person name="Lai Z."/>
            <person name="Lasko P."/>
            <person name="Lei Y."/>
            <person name="Levitsky A.A."/>
            <person name="Li J.H."/>
            <person name="Li Z."/>
            <person name="Liang Y."/>
            <person name="Lin X."/>
            <person name="Liu X."/>
            <person name="Mattei B."/>
            <person name="McIntosh T.C."/>
            <person name="McLeod M.P."/>
            <person name="McPherson D."/>
            <person name="Merkulov G."/>
            <person name="Milshina N.V."/>
            <person name="Mobarry C."/>
            <person name="Morris J."/>
            <person name="Moshrefi A."/>
            <person name="Mount S.M."/>
            <person name="Moy M."/>
            <person name="Murphy B."/>
            <person name="Murphy L."/>
            <person name="Muzny D.M."/>
            <person name="Nelson D.L."/>
            <person name="Nelson D.R."/>
            <person name="Nelson K.A."/>
            <person name="Nixon K."/>
            <person name="Nusskern D.R."/>
            <person name="Pacleb J.M."/>
            <person name="Palazzolo M."/>
            <person name="Pittman G.S."/>
            <person name="Pan S."/>
            <person name="Pollard J."/>
            <person name="Puri V."/>
            <person name="Reese M.G."/>
            <person name="Reinert K."/>
            <person name="Remington K."/>
            <person name="Saunders R.D.C."/>
            <person name="Scheeler F."/>
            <person name="Shen H."/>
            <person name="Shue B.C."/>
            <person name="Siden-Kiamos I."/>
            <person name="Simpson M."/>
            <person name="Skupski M.P."/>
            <person name="Smith T.J."/>
            <person name="Spier E."/>
            <person name="Spradling A.C."/>
            <person name="Stapleton M."/>
            <person name="Strong R."/>
            <person name="Sun E."/>
            <person name="Svirskas R."/>
            <person name="Tector C."/>
            <person name="Turner R."/>
            <person name="Venter E."/>
            <person name="Wang A.H."/>
            <person name="Wang X."/>
            <person name="Wang Z.-Y."/>
            <person name="Wassarman D.A."/>
            <person name="Weinstock G.M."/>
            <person name="Weissenbach J."/>
            <person name="Williams S.M."/>
            <person name="Woodage T."/>
            <person name="Worley K.C."/>
            <person name="Wu D."/>
            <person name="Yang S."/>
            <person name="Yao Q.A."/>
            <person name="Ye J."/>
            <person name="Yeh R.-F."/>
            <person name="Zaveri J.S."/>
            <person name="Zhan M."/>
            <person name="Zhang G."/>
            <person name="Zhao Q."/>
            <person name="Zheng L."/>
            <person name="Zheng X.H."/>
            <person name="Zhong F.N."/>
            <person name="Zhong W."/>
            <person name="Zhou X."/>
            <person name="Zhu S.C."/>
            <person name="Zhu X."/>
            <person name="Smith H.O."/>
            <person name="Gibbs R.A."/>
            <person name="Myers E.W."/>
            <person name="Rubin G.M."/>
            <person name="Venter J.C."/>
        </authorList>
    </citation>
    <scope>NUCLEOTIDE SEQUENCE [LARGE SCALE GENOMIC DNA]</scope>
    <source>
        <strain>Berkeley</strain>
    </source>
</reference>
<reference key="2">
    <citation type="journal article" date="2002" name="Genome Biol.">
        <title>Annotation of the Drosophila melanogaster euchromatic genome: a systematic review.</title>
        <authorList>
            <person name="Misra S."/>
            <person name="Crosby M.A."/>
            <person name="Mungall C.J."/>
            <person name="Matthews B.B."/>
            <person name="Campbell K.S."/>
            <person name="Hradecky P."/>
            <person name="Huang Y."/>
            <person name="Kaminker J.S."/>
            <person name="Millburn G.H."/>
            <person name="Prochnik S.E."/>
            <person name="Smith C.D."/>
            <person name="Tupy J.L."/>
            <person name="Whitfield E.J."/>
            <person name="Bayraktaroglu L."/>
            <person name="Berman B.P."/>
            <person name="Bettencourt B.R."/>
            <person name="Celniker S.E."/>
            <person name="de Grey A.D.N.J."/>
            <person name="Drysdale R.A."/>
            <person name="Harris N.L."/>
            <person name="Richter J."/>
            <person name="Russo S."/>
            <person name="Schroeder A.J."/>
            <person name="Shu S.Q."/>
            <person name="Stapleton M."/>
            <person name="Yamada C."/>
            <person name="Ashburner M."/>
            <person name="Gelbart W.M."/>
            <person name="Rubin G.M."/>
            <person name="Lewis S.E."/>
        </authorList>
    </citation>
    <scope>GENOME REANNOTATION</scope>
    <source>
        <strain>Berkeley</strain>
    </source>
</reference>
<reference key="3">
    <citation type="journal article" date="2022" name="J. Cell Sci.">
        <title>The Hob proteins are novel and conserved lipid-binding proteins at ER-PM contact sites.</title>
        <authorList>
            <person name="Neuman S.D."/>
            <person name="Jorgensen J.R."/>
            <person name="Cavanagh A.T."/>
            <person name="Smyth J.T."/>
            <person name="Selegue J.E."/>
            <person name="Emr S.D."/>
            <person name="Bashirullah A."/>
        </authorList>
    </citation>
    <scope>FUNCTION</scope>
    <scope>SUBCELLULAR LOCATION</scope>
    <scope>DISRUPTION PHENOTYPE</scope>
</reference>
<reference key="4">
    <citation type="journal article" date="2022" name="Trends Cell Biol.">
        <title>A novel superfamily of bridge-like lipid transfer proteins.</title>
        <authorList>
            <person name="Neuman S.D."/>
            <person name="Levine T.P."/>
            <person name="Bashirullah A."/>
        </authorList>
    </citation>
    <scope>REVIEW OF FUNCTION</scope>
</reference>
<comment type="function">
    <text evidence="4">Tube-forming lipid transport protein which binds to phosphatidylinositols and affects phosphatidylinositol-4,5-bisphosphate (PtdIns-4,5-P2) distribution.</text>
</comment>
<comment type="subcellular location">
    <subcellularLocation>
        <location evidence="4">Cell membrane</location>
    </subcellularLocation>
    <subcellularLocation>
        <location evidence="4">Endoplasmic reticulum membrane</location>
    </subcellularLocation>
    <subcellularLocation>
        <location evidence="1">Mitochondrion membrane</location>
    </subcellularLocation>
    <text evidence="4">Localizes to endoplasmic reticulum-cell membrane and some endoplasmic reticulum-mitochondria contact sites.</text>
</comment>
<comment type="disruption phenotype">
    <text evidence="4">Mutants show a dramatic reduction in animal body size, lethality during metamorphosis and defects in regulated exocytosis in multiple cell types, including the insulin-producing cells and the larval salivary glands.</text>
</comment>